<comment type="function">
    <text evidence="1">Catalyzes the transfer of the gamma-phosphate of ATP to D-galactose to form alpha-D-galactose-1-phosphate (Gal-1-P).</text>
</comment>
<comment type="catalytic activity">
    <reaction evidence="1">
        <text>alpha-D-galactose + ATP = alpha-D-galactose 1-phosphate + ADP + H(+)</text>
        <dbReference type="Rhea" id="RHEA:13553"/>
        <dbReference type="ChEBI" id="CHEBI:15378"/>
        <dbReference type="ChEBI" id="CHEBI:28061"/>
        <dbReference type="ChEBI" id="CHEBI:30616"/>
        <dbReference type="ChEBI" id="CHEBI:58336"/>
        <dbReference type="ChEBI" id="CHEBI:456216"/>
        <dbReference type="EC" id="2.7.1.6"/>
    </reaction>
</comment>
<comment type="pathway">
    <text evidence="1">Carbohydrate metabolism; galactose metabolism.</text>
</comment>
<comment type="subcellular location">
    <subcellularLocation>
        <location evidence="1">Cytoplasm</location>
    </subcellularLocation>
</comment>
<comment type="similarity">
    <text evidence="1">Belongs to the GHMP kinase family. GalK subfamily.</text>
</comment>
<name>GAL1_CROS8</name>
<accession>A7MIX5</accession>
<feature type="chain" id="PRO_1000005751" description="Galactokinase">
    <location>
        <begin position="1"/>
        <end position="382"/>
    </location>
</feature>
<feature type="active site" description="Proton acceptor" evidence="1">
    <location>
        <position position="174"/>
    </location>
</feature>
<feature type="binding site" evidence="1">
    <location>
        <begin position="34"/>
        <end position="37"/>
    </location>
    <ligand>
        <name>substrate</name>
    </ligand>
</feature>
<feature type="binding site" evidence="1">
    <location>
        <begin position="124"/>
        <end position="130"/>
    </location>
    <ligand>
        <name>ATP</name>
        <dbReference type="ChEBI" id="CHEBI:30616"/>
    </ligand>
</feature>
<feature type="binding site" evidence="1">
    <location>
        <position position="130"/>
    </location>
    <ligand>
        <name>Mg(2+)</name>
        <dbReference type="ChEBI" id="CHEBI:18420"/>
    </ligand>
</feature>
<feature type="binding site" evidence="1">
    <location>
        <position position="162"/>
    </location>
    <ligand>
        <name>Mg(2+)</name>
        <dbReference type="ChEBI" id="CHEBI:18420"/>
    </ligand>
</feature>
<feature type="binding site" evidence="1">
    <location>
        <position position="223"/>
    </location>
    <ligand>
        <name>substrate</name>
    </ligand>
</feature>
<feature type="site" description="Transition state stabilizer" evidence="1">
    <location>
        <position position="28"/>
    </location>
</feature>
<dbReference type="EC" id="2.7.1.6" evidence="1"/>
<dbReference type="EMBL" id="CP000783">
    <property type="protein sequence ID" value="ABU77833.1"/>
    <property type="molecule type" value="Genomic_DNA"/>
</dbReference>
<dbReference type="RefSeq" id="WP_012125319.1">
    <property type="nucleotide sequence ID" value="NC_009778.1"/>
</dbReference>
<dbReference type="SMR" id="A7MIX5"/>
<dbReference type="KEGG" id="esa:ESA_02588"/>
<dbReference type="PATRIC" id="fig|290339.8.peg.2308"/>
<dbReference type="HOGENOM" id="CLU_017814_2_1_6"/>
<dbReference type="UniPathway" id="UPA00214"/>
<dbReference type="Proteomes" id="UP000000260">
    <property type="component" value="Chromosome"/>
</dbReference>
<dbReference type="GO" id="GO:0005829">
    <property type="term" value="C:cytosol"/>
    <property type="evidence" value="ECO:0007669"/>
    <property type="project" value="TreeGrafter"/>
</dbReference>
<dbReference type="GO" id="GO:0005524">
    <property type="term" value="F:ATP binding"/>
    <property type="evidence" value="ECO:0007669"/>
    <property type="project" value="UniProtKB-UniRule"/>
</dbReference>
<dbReference type="GO" id="GO:0004335">
    <property type="term" value="F:galactokinase activity"/>
    <property type="evidence" value="ECO:0007669"/>
    <property type="project" value="UniProtKB-UniRule"/>
</dbReference>
<dbReference type="GO" id="GO:0000287">
    <property type="term" value="F:magnesium ion binding"/>
    <property type="evidence" value="ECO:0007669"/>
    <property type="project" value="UniProtKB-UniRule"/>
</dbReference>
<dbReference type="GO" id="GO:0006012">
    <property type="term" value="P:galactose metabolic process"/>
    <property type="evidence" value="ECO:0007669"/>
    <property type="project" value="UniProtKB-UniRule"/>
</dbReference>
<dbReference type="FunFam" id="3.30.230.10:FF:000017">
    <property type="entry name" value="Galactokinase"/>
    <property type="match status" value="1"/>
</dbReference>
<dbReference type="FunFam" id="3.30.70.890:FF:000001">
    <property type="entry name" value="Galactokinase"/>
    <property type="match status" value="1"/>
</dbReference>
<dbReference type="Gene3D" id="3.30.230.10">
    <property type="match status" value="1"/>
</dbReference>
<dbReference type="Gene3D" id="3.30.70.890">
    <property type="entry name" value="GHMP kinase, C-terminal domain"/>
    <property type="match status" value="1"/>
</dbReference>
<dbReference type="HAMAP" id="MF_00246">
    <property type="entry name" value="Galactokinase"/>
    <property type="match status" value="1"/>
</dbReference>
<dbReference type="InterPro" id="IPR000705">
    <property type="entry name" value="Galactokinase"/>
</dbReference>
<dbReference type="InterPro" id="IPR022963">
    <property type="entry name" value="Galactokinase_bac"/>
</dbReference>
<dbReference type="InterPro" id="IPR019741">
    <property type="entry name" value="Galactokinase_CS"/>
</dbReference>
<dbReference type="InterPro" id="IPR019539">
    <property type="entry name" value="GalKase_N"/>
</dbReference>
<dbReference type="InterPro" id="IPR013750">
    <property type="entry name" value="GHMP_kinase_C_dom"/>
</dbReference>
<dbReference type="InterPro" id="IPR036554">
    <property type="entry name" value="GHMP_kinase_C_sf"/>
</dbReference>
<dbReference type="InterPro" id="IPR006204">
    <property type="entry name" value="GHMP_kinase_N_dom"/>
</dbReference>
<dbReference type="InterPro" id="IPR006203">
    <property type="entry name" value="GHMP_knse_ATP-bd_CS"/>
</dbReference>
<dbReference type="InterPro" id="IPR006206">
    <property type="entry name" value="Mevalonate/galactokinase"/>
</dbReference>
<dbReference type="InterPro" id="IPR020568">
    <property type="entry name" value="Ribosomal_Su5_D2-typ_SF"/>
</dbReference>
<dbReference type="InterPro" id="IPR014721">
    <property type="entry name" value="Ribsml_uS5_D2-typ_fold_subgr"/>
</dbReference>
<dbReference type="NCBIfam" id="TIGR00131">
    <property type="entry name" value="gal_kin"/>
    <property type="match status" value="1"/>
</dbReference>
<dbReference type="NCBIfam" id="NF003472">
    <property type="entry name" value="PRK05101.1"/>
    <property type="match status" value="1"/>
</dbReference>
<dbReference type="PANTHER" id="PTHR10457:SF7">
    <property type="entry name" value="GALACTOKINASE-RELATED"/>
    <property type="match status" value="1"/>
</dbReference>
<dbReference type="PANTHER" id="PTHR10457">
    <property type="entry name" value="MEVALONATE KINASE/GALACTOKINASE"/>
    <property type="match status" value="1"/>
</dbReference>
<dbReference type="Pfam" id="PF10509">
    <property type="entry name" value="GalKase_gal_bdg"/>
    <property type="match status" value="1"/>
</dbReference>
<dbReference type="Pfam" id="PF08544">
    <property type="entry name" value="GHMP_kinases_C"/>
    <property type="match status" value="1"/>
</dbReference>
<dbReference type="Pfam" id="PF00288">
    <property type="entry name" value="GHMP_kinases_N"/>
    <property type="match status" value="1"/>
</dbReference>
<dbReference type="PIRSF" id="PIRSF000530">
    <property type="entry name" value="Galactokinase"/>
    <property type="match status" value="1"/>
</dbReference>
<dbReference type="PRINTS" id="PR00473">
    <property type="entry name" value="GALCTOKINASE"/>
</dbReference>
<dbReference type="PRINTS" id="PR00959">
    <property type="entry name" value="MEVGALKINASE"/>
</dbReference>
<dbReference type="SUPFAM" id="SSF55060">
    <property type="entry name" value="GHMP Kinase, C-terminal domain"/>
    <property type="match status" value="1"/>
</dbReference>
<dbReference type="SUPFAM" id="SSF54211">
    <property type="entry name" value="Ribosomal protein S5 domain 2-like"/>
    <property type="match status" value="1"/>
</dbReference>
<dbReference type="PROSITE" id="PS00106">
    <property type="entry name" value="GALACTOKINASE"/>
    <property type="match status" value="1"/>
</dbReference>
<dbReference type="PROSITE" id="PS00627">
    <property type="entry name" value="GHMP_KINASES_ATP"/>
    <property type="match status" value="1"/>
</dbReference>
<keyword id="KW-0067">ATP-binding</keyword>
<keyword id="KW-0119">Carbohydrate metabolism</keyword>
<keyword id="KW-0963">Cytoplasm</keyword>
<keyword id="KW-0299">Galactose metabolism</keyword>
<keyword id="KW-0418">Kinase</keyword>
<keyword id="KW-0460">Magnesium</keyword>
<keyword id="KW-0479">Metal-binding</keyword>
<keyword id="KW-0547">Nucleotide-binding</keyword>
<keyword id="KW-1185">Reference proteome</keyword>
<keyword id="KW-0808">Transferase</keyword>
<proteinExistence type="inferred from homology"/>
<evidence type="ECO:0000255" key="1">
    <source>
        <dbReference type="HAMAP-Rule" id="MF_00246"/>
    </source>
</evidence>
<sequence length="382" mass="41393">MSLKEKTHALFAEKFGYPATTHIQAPGRVNLIGEHTDYNDGFVLPCAIDYQTVISCAKRDDRRVRVVAADYDNETDEFSLDEPILTHDSQQWSNYVRGVVKHLQQRDPGFGGADLVISGNVPQGAGLSSSASLEVAVGTVFRHLYHLSLDGAQIALNGQEAENQFVGCNCGIMDQLISALGKKDHALLIDCRSLGTKAVPMPQGVAVVIINSNFKRTLVGSEYNTRREQCETGARFFTQKALRDVSLDQFNAVAHELDPIVAKRVRHVLTENARTVEAADALAKGNLTRMGELMAESHASMRDDFEITVPQIDTLVEIVKSVIGDKGGVRMTGGGFGGCVVALVPEALVPEVQAAVEAQYEARTGIKETFYVCKPSEGAGLC</sequence>
<protein>
    <recommendedName>
        <fullName evidence="1">Galactokinase</fullName>
        <ecNumber evidence="1">2.7.1.6</ecNumber>
    </recommendedName>
    <alternativeName>
        <fullName evidence="1">Galactose kinase</fullName>
    </alternativeName>
</protein>
<gene>
    <name evidence="1" type="primary">galK</name>
    <name type="ordered locus">ESA_02588</name>
</gene>
<organism>
    <name type="scientific">Cronobacter sakazakii (strain ATCC BAA-894)</name>
    <name type="common">Enterobacter sakazakii</name>
    <dbReference type="NCBI Taxonomy" id="290339"/>
    <lineage>
        <taxon>Bacteria</taxon>
        <taxon>Pseudomonadati</taxon>
        <taxon>Pseudomonadota</taxon>
        <taxon>Gammaproteobacteria</taxon>
        <taxon>Enterobacterales</taxon>
        <taxon>Enterobacteriaceae</taxon>
        <taxon>Cronobacter</taxon>
    </lineage>
</organism>
<reference key="1">
    <citation type="journal article" date="2010" name="PLoS ONE">
        <title>Genome sequence of Cronobacter sakazakii BAA-894 and comparative genomic hybridization analysis with other Cronobacter species.</title>
        <authorList>
            <person name="Kucerova E."/>
            <person name="Clifton S.W."/>
            <person name="Xia X.Q."/>
            <person name="Long F."/>
            <person name="Porwollik S."/>
            <person name="Fulton L."/>
            <person name="Fronick C."/>
            <person name="Minx P."/>
            <person name="Kyung K."/>
            <person name="Warren W."/>
            <person name="Fulton R."/>
            <person name="Feng D."/>
            <person name="Wollam A."/>
            <person name="Shah N."/>
            <person name="Bhonagiri V."/>
            <person name="Nash W.E."/>
            <person name="Hallsworth-Pepin K."/>
            <person name="Wilson R.K."/>
            <person name="McClelland M."/>
            <person name="Forsythe S.J."/>
        </authorList>
    </citation>
    <scope>NUCLEOTIDE SEQUENCE [LARGE SCALE GENOMIC DNA]</scope>
    <source>
        <strain>ATCC BAA-894</strain>
    </source>
</reference>